<organism>
    <name type="scientific">Rattus norvegicus</name>
    <name type="common">Rat</name>
    <dbReference type="NCBI Taxonomy" id="10116"/>
    <lineage>
        <taxon>Eukaryota</taxon>
        <taxon>Metazoa</taxon>
        <taxon>Chordata</taxon>
        <taxon>Craniata</taxon>
        <taxon>Vertebrata</taxon>
        <taxon>Euteleostomi</taxon>
        <taxon>Mammalia</taxon>
        <taxon>Eutheria</taxon>
        <taxon>Euarchontoglires</taxon>
        <taxon>Glires</taxon>
        <taxon>Rodentia</taxon>
        <taxon>Myomorpha</taxon>
        <taxon>Muroidea</taxon>
        <taxon>Muridae</taxon>
        <taxon>Murinae</taxon>
        <taxon>Rattus</taxon>
    </lineage>
</organism>
<reference key="1">
    <citation type="journal article" date="2007" name="FEBS Lett.">
        <title>Redundant promoter elements mediate IL-3-induced expression of a novel cytokine-inducible gene, cyclon.</title>
        <authorList>
            <person name="Hoshino A."/>
            <person name="Fujii H."/>
        </authorList>
    </citation>
    <scope>NUCLEOTIDE SEQUENCE [MRNA]</scope>
</reference>
<reference key="2">
    <citation type="journal article" date="2004" name="Genome Res.">
        <title>The status, quality, and expansion of the NIH full-length cDNA project: the Mammalian Gene Collection (MGC).</title>
        <authorList>
            <consortium name="The MGC Project Team"/>
        </authorList>
    </citation>
    <scope>NUCLEOTIDE SEQUENCE [LARGE SCALE MRNA]</scope>
    <source>
        <tissue>Heart</tissue>
    </source>
</reference>
<reference key="3">
    <citation type="journal article" date="2012" name="Nat. Commun.">
        <title>Quantitative maps of protein phosphorylation sites across 14 different rat organs and tissues.</title>
        <authorList>
            <person name="Lundby A."/>
            <person name="Secher A."/>
            <person name="Lage K."/>
            <person name="Nordsborg N.B."/>
            <person name="Dmytriyev A."/>
            <person name="Lundby C."/>
            <person name="Olsen J.V."/>
        </authorList>
    </citation>
    <scope>PHOSPHORYLATION [LARGE SCALE ANALYSIS] AT SER-81 AND SER-124</scope>
    <scope>IDENTIFICATION BY MASS SPECTROMETRY [LARGE SCALE ANALYSIS]</scope>
</reference>
<protein>
    <recommendedName>
        <fullName>Coiled-coil domain-containing protein 86</fullName>
    </recommendedName>
    <alternativeName>
        <fullName evidence="5">Cytokine-induced protein with coiled-coil domain</fullName>
    </alternativeName>
</protein>
<dbReference type="EMBL" id="DQ501253">
    <property type="protein sequence ID" value="ABF68614.1"/>
    <property type="molecule type" value="mRNA"/>
</dbReference>
<dbReference type="EMBL" id="BC083770">
    <property type="protein sequence ID" value="AAH83770.1"/>
    <property type="molecule type" value="mRNA"/>
</dbReference>
<dbReference type="RefSeq" id="NP_001006975.1">
    <property type="nucleotide sequence ID" value="NM_001006974.3"/>
</dbReference>
<dbReference type="SMR" id="Q5XIB5"/>
<dbReference type="FunCoup" id="Q5XIB5">
    <property type="interactions" value="746"/>
</dbReference>
<dbReference type="STRING" id="10116.ENSRNOP00000028405"/>
<dbReference type="iPTMnet" id="Q5XIB5"/>
<dbReference type="PhosphoSitePlus" id="Q5XIB5"/>
<dbReference type="jPOST" id="Q5XIB5"/>
<dbReference type="PaxDb" id="10116-ENSRNOP00000028405"/>
<dbReference type="GeneID" id="293738"/>
<dbReference type="KEGG" id="rno:293738"/>
<dbReference type="UCSC" id="RGD:1359280">
    <property type="organism name" value="rat"/>
</dbReference>
<dbReference type="AGR" id="RGD:1359280"/>
<dbReference type="CTD" id="79080"/>
<dbReference type="RGD" id="1359280">
    <property type="gene designation" value="Ccdc86"/>
</dbReference>
<dbReference type="VEuPathDB" id="HostDB:ENSRNOG00000020925"/>
<dbReference type="eggNOG" id="KOG4538">
    <property type="taxonomic scope" value="Eukaryota"/>
</dbReference>
<dbReference type="HOGENOM" id="CLU_065828_0_0_1"/>
<dbReference type="InParanoid" id="Q5XIB5"/>
<dbReference type="OrthoDB" id="277961at2759"/>
<dbReference type="PhylomeDB" id="Q5XIB5"/>
<dbReference type="TreeFam" id="TF325663"/>
<dbReference type="PRO" id="PR:Q5XIB5"/>
<dbReference type="Proteomes" id="UP000002494">
    <property type="component" value="Chromosome 1"/>
</dbReference>
<dbReference type="Bgee" id="ENSRNOG00000020925">
    <property type="expression patterns" value="Expressed in ovary and 20 other cell types or tissues"/>
</dbReference>
<dbReference type="GO" id="GO:0005730">
    <property type="term" value="C:nucleolus"/>
    <property type="evidence" value="ECO:0000318"/>
    <property type="project" value="GO_Central"/>
</dbReference>
<dbReference type="GO" id="GO:0005634">
    <property type="term" value="C:nucleus"/>
    <property type="evidence" value="ECO:0000266"/>
    <property type="project" value="RGD"/>
</dbReference>
<dbReference type="InterPro" id="IPR026570">
    <property type="entry name" value="CCDC86"/>
</dbReference>
<dbReference type="InterPro" id="IPR005579">
    <property type="entry name" value="Cgr1-like"/>
</dbReference>
<dbReference type="PANTHER" id="PTHR13557">
    <property type="entry name" value="COILED-COIL DOMAIN-CONTAINING PROTEIN 86"/>
    <property type="match status" value="1"/>
</dbReference>
<dbReference type="PANTHER" id="PTHR13557:SF1">
    <property type="entry name" value="COILED-COIL DOMAIN-CONTAINING PROTEIN 86"/>
    <property type="match status" value="1"/>
</dbReference>
<dbReference type="Pfam" id="PF03879">
    <property type="entry name" value="Cgr1"/>
    <property type="match status" value="1"/>
</dbReference>
<keyword id="KW-0158">Chromosome</keyword>
<keyword id="KW-0164">Citrullination</keyword>
<keyword id="KW-0175">Coiled coil</keyword>
<keyword id="KW-0539">Nucleus</keyword>
<keyword id="KW-0597">Phosphoprotein</keyword>
<keyword id="KW-1185">Reference proteome</keyword>
<accession>Q5XIB5</accession>
<name>CCD86_RAT</name>
<gene>
    <name evidence="6" type="primary">Ccdc86</name>
    <name evidence="5" type="synonym">Cyclon</name>
</gene>
<feature type="chain" id="PRO_0000286095" description="Coiled-coil domain-containing protein 86">
    <location>
        <begin position="1"/>
        <end position="341"/>
    </location>
</feature>
<feature type="region of interest" description="Disordered" evidence="4">
    <location>
        <begin position="1"/>
        <end position="341"/>
    </location>
</feature>
<feature type="coiled-coil region" evidence="3">
    <location>
        <begin position="261"/>
        <end position="304"/>
    </location>
</feature>
<feature type="compositionally biased region" description="Basic and acidic residues" evidence="4">
    <location>
        <begin position="26"/>
        <end position="49"/>
    </location>
</feature>
<feature type="compositionally biased region" description="Low complexity" evidence="4">
    <location>
        <begin position="64"/>
        <end position="73"/>
    </location>
</feature>
<feature type="compositionally biased region" description="Polar residues" evidence="4">
    <location>
        <begin position="105"/>
        <end position="114"/>
    </location>
</feature>
<feature type="compositionally biased region" description="Basic and acidic residues" evidence="4">
    <location>
        <begin position="130"/>
        <end position="139"/>
    </location>
</feature>
<feature type="compositionally biased region" description="Basic residues" evidence="4">
    <location>
        <begin position="219"/>
        <end position="235"/>
    </location>
</feature>
<feature type="compositionally biased region" description="Basic and acidic residues" evidence="4">
    <location>
        <begin position="254"/>
        <end position="298"/>
    </location>
</feature>
<feature type="compositionally biased region" description="Basic residues" evidence="4">
    <location>
        <begin position="307"/>
        <end position="317"/>
    </location>
</feature>
<feature type="modified residue" description="Phosphoserine" evidence="1">
    <location>
        <position position="18"/>
    </location>
</feature>
<feature type="modified residue" description="Phosphoserine" evidence="1">
    <location>
        <position position="59"/>
    </location>
</feature>
<feature type="modified residue" description="Phosphothreonine" evidence="1">
    <location>
        <position position="66"/>
    </location>
</feature>
<feature type="modified residue" description="Phosphoserine" evidence="1">
    <location>
        <position position="67"/>
    </location>
</feature>
<feature type="modified residue" description="Phosphoserine" evidence="1">
    <location>
        <position position="70"/>
    </location>
</feature>
<feature type="modified residue" description="Phosphoserine" evidence="7">
    <location>
        <position position="81"/>
    </location>
</feature>
<feature type="modified residue" description="Phosphoserine" evidence="1">
    <location>
        <position position="92"/>
    </location>
</feature>
<feature type="modified residue" description="Phosphoserine" evidence="1">
    <location>
        <position position="103"/>
    </location>
</feature>
<feature type="modified residue" description="Phosphoserine" evidence="1">
    <location>
        <position position="114"/>
    </location>
</feature>
<feature type="modified residue" description="Phosphoserine" evidence="7">
    <location>
        <position position="124"/>
    </location>
</feature>
<feature type="modified residue" description="Phosphoserine" evidence="2">
    <location>
        <position position="142"/>
    </location>
</feature>
<feature type="modified residue" description="Phosphoserine" evidence="2">
    <location>
        <position position="169"/>
    </location>
</feature>
<feature type="modified residue" description="Phosphoserine" evidence="2">
    <location>
        <position position="170"/>
    </location>
</feature>
<feature type="modified residue" description="Phosphoserine" evidence="2">
    <location>
        <position position="200"/>
    </location>
</feature>
<feature type="modified residue" description="Citrulline" evidence="2">
    <location>
        <position position="323"/>
    </location>
</feature>
<evidence type="ECO:0000250" key="1">
    <source>
        <dbReference type="UniProtKB" id="Q9H6F5"/>
    </source>
</evidence>
<evidence type="ECO:0000250" key="2">
    <source>
        <dbReference type="UniProtKB" id="Q9JJ89"/>
    </source>
</evidence>
<evidence type="ECO:0000255" key="3"/>
<evidence type="ECO:0000256" key="4">
    <source>
        <dbReference type="SAM" id="MobiDB-lite"/>
    </source>
</evidence>
<evidence type="ECO:0000303" key="5">
    <source>
    </source>
</evidence>
<evidence type="ECO:0000312" key="6">
    <source>
        <dbReference type="RGD" id="1359280"/>
    </source>
</evidence>
<evidence type="ECO:0007744" key="7">
    <source>
    </source>
</evidence>
<comment type="function">
    <text evidence="1">Required for proper chromosome segregation during mitosis and error-free mitotic progression.</text>
</comment>
<comment type="subcellular location">
    <subcellularLocation>
        <location evidence="1">Nucleus</location>
    </subcellularLocation>
    <subcellularLocation>
        <location evidence="1">Chromosome</location>
    </subcellularLocation>
    <subcellularLocation>
        <location evidence="1">Nucleus</location>
        <location evidence="1">Nucleolus</location>
    </subcellularLocation>
    <text evidence="1">Localized to the nucleolus during the interphase and localized to the perichromosomal layer (also known as chromosome periphery) during mitosis; is particularly enriched at the perichromosomal layer during anaphase. Colocalizes with MKI67 during interphase and mitotic exit.</text>
</comment>
<comment type="PTM">
    <text evidence="2">Citrullinated by PADI4.</text>
</comment>
<proteinExistence type="evidence at protein level"/>
<sequence length="341" mass="38585">MGTPLRRSRRLEGLNPLSLENLPDPEVSRAKRALVDFKSNPEETRELESPRVPPLDLVSPQPQPETSPESPCPKQDAGFGSPQRQPEPHPGSLQLHQDLGLDSPAGQTESNPESPQREQSSKLSPTQDSEVAHAKEEVIPRSPEPCPGQQAPGPEPSQPAQELAFQAPSSPERQLEPSKLPPAGESVTGSLDLKKRVIASPQAPASKKLKEELPVIPKGKPKSGRVWKDRSKKRFSQMVQDKPLRTSWQRKMKERQERKLAKDFARHLEEEKQRRRQEKKERRAENLRRRLENERKAEIVQVIRNPAKLKKAKKKQLRSIQKRDTLALLQKQPPQRPVAKV</sequence>